<feature type="chain" id="PRO_0000399480" description="Capsid protein">
    <location>
        <begin position="1"/>
        <end position="454"/>
    </location>
</feature>
<name>CAPSD_OCSVU</name>
<reference key="1">
    <citation type="journal article" date="1995" name="J. Gen. Virol.">
        <title>The nucleotide sequence and proposed genome organization of oat chlorotic stunt virus, a new soil-borne virus of cereals.</title>
        <authorList>
            <person name="Boonham N."/>
            <person name="Henry C.M."/>
            <person name="Wood K.R."/>
        </authorList>
    </citation>
    <scope>NUCLEOTIDE SEQUENCE [GENOMIC RNA]</scope>
</reference>
<sequence length="454" mass="48116">MTLNLRKVPAYLPGKVDGALTNLVHAAVDHVVPGLGKAEKAAAVYNIKQVVKKLGTYTEQGVKKIAKKTLGELGYLNYTPSSHLGMAITGRGTKQINMSRSTNAGGFALGGTTAAPVSISRNINRRSKPSIKMMGDAVVISHSEMLGAINSGTPSSNVTAFRCTGYRANPGMSTIFPWLSATAVNYEKYKFRRLSFTLVPLVSTNYSGRIGVGFDYDSSDLVPGNRQEFYALSNHCENMPWQESTVEIKCDNAYRFTGTHVAADNKLIDLGQVVVMSDSVSNGGTISAALPLFDLIVNYTVELIEPQQALFSSQLYSGSTTFTSGIPLGTGADTTTVVGPTVVNSTTVTNCVVTFKLPAGVFEVSYFIAWSTGTAAVVPTVPTTGAGSKLSNTSTGSNSYGVCFINSPVECDLLLTATVLLIIPTLPSSTCVFHAPARRCTTPMCHRLLTSLAG</sequence>
<gene>
    <name type="ORF">ORF2</name>
</gene>
<organism>
    <name type="scientific">Oat chlorotic stunt virus (isolate United Kingdom)</name>
    <name type="common">OCSV</name>
    <dbReference type="NCBI Taxonomy" id="652110"/>
    <lineage>
        <taxon>Viruses</taxon>
        <taxon>Riboviria</taxon>
        <taxon>Orthornavirae</taxon>
        <taxon>Kitrinoviricota</taxon>
        <taxon>Tolucaviricetes</taxon>
        <taxon>Tolivirales</taxon>
        <taxon>Tombusviridae</taxon>
        <taxon>Procedovirinae</taxon>
        <taxon>Avenavirus</taxon>
        <taxon>Avenavirus avenae</taxon>
    </lineage>
</organism>
<dbReference type="EMBL" id="X83964">
    <property type="protein sequence ID" value="CAA58798.1"/>
    <property type="molecule type" value="Genomic_RNA"/>
</dbReference>
<dbReference type="RefSeq" id="NP_619753.1">
    <property type="nucleotide sequence ID" value="NC_003633.1"/>
</dbReference>
<dbReference type="SMR" id="Q83928"/>
<dbReference type="KEGG" id="vg:1732852"/>
<dbReference type="Proteomes" id="UP000000573">
    <property type="component" value="Segment"/>
</dbReference>
<dbReference type="GO" id="GO:0039617">
    <property type="term" value="C:T=3 icosahedral viral capsid"/>
    <property type="evidence" value="ECO:0007669"/>
    <property type="project" value="UniProtKB-KW"/>
</dbReference>
<dbReference type="GO" id="GO:0005198">
    <property type="term" value="F:structural molecule activity"/>
    <property type="evidence" value="ECO:0007669"/>
    <property type="project" value="InterPro"/>
</dbReference>
<dbReference type="Gene3D" id="2.60.120.20">
    <property type="match status" value="1"/>
</dbReference>
<dbReference type="InterPro" id="IPR000937">
    <property type="entry name" value="Capsid_prot_S-dom_vir"/>
</dbReference>
<dbReference type="InterPro" id="IPR029053">
    <property type="entry name" value="Viral_coat"/>
</dbReference>
<dbReference type="Pfam" id="PF00729">
    <property type="entry name" value="Viral_coat"/>
    <property type="match status" value="1"/>
</dbReference>
<dbReference type="PRINTS" id="PR00233">
    <property type="entry name" value="ICOSAHEDRAL"/>
</dbReference>
<dbReference type="SUPFAM" id="SSF88633">
    <property type="entry name" value="Positive stranded ssRNA viruses"/>
    <property type="match status" value="1"/>
</dbReference>
<keyword id="KW-0167">Capsid protein</keyword>
<keyword id="KW-1185">Reference proteome</keyword>
<keyword id="KW-1142">T=3 icosahedral capsid protein</keyword>
<keyword id="KW-0946">Virion</keyword>
<accession>Q83928</accession>
<organismHost>
    <name type="scientific">Avena sativa</name>
    <name type="common">Oat</name>
    <dbReference type="NCBI Taxonomy" id="4498"/>
</organismHost>
<protein>
    <recommendedName>
        <fullName>Capsid protein</fullName>
    </recommendedName>
    <alternativeName>
        <fullName>p48</fullName>
    </alternativeName>
</protein>
<comment type="function">
    <text>Capsid protein self-assembles to form an icosahedral capsid with a T=3 symmetry, about 28-34 nm in diameter, and consisting of 180 capsid proteins.</text>
</comment>
<comment type="subunit">
    <text evidence="1">Homomultimer.</text>
</comment>
<comment type="subcellular location">
    <subcellularLocation>
        <location evidence="1">Virion</location>
    </subcellularLocation>
</comment>
<comment type="similarity">
    <text evidence="1">Belongs to the icosahedral plant coat protein family.</text>
</comment>
<proteinExistence type="inferred from homology"/>
<evidence type="ECO:0000305" key="1"/>